<proteinExistence type="inferred from homology"/>
<comment type="catalytic activity">
    <reaction evidence="1">
        <text>D-glucuronate = D-fructuronate</text>
        <dbReference type="Rhea" id="RHEA:13049"/>
        <dbReference type="ChEBI" id="CHEBI:58720"/>
        <dbReference type="ChEBI" id="CHEBI:59863"/>
        <dbReference type="EC" id="5.3.1.12"/>
    </reaction>
</comment>
<comment type="catalytic activity">
    <reaction evidence="1">
        <text>aldehydo-D-galacturonate = keto-D-tagaturonate</text>
        <dbReference type="Rhea" id="RHEA:27702"/>
        <dbReference type="ChEBI" id="CHEBI:12952"/>
        <dbReference type="ChEBI" id="CHEBI:17886"/>
        <dbReference type="EC" id="5.3.1.12"/>
    </reaction>
</comment>
<comment type="pathway">
    <text evidence="1">Carbohydrate metabolism; pentose and glucuronate interconversion.</text>
</comment>
<comment type="similarity">
    <text evidence="1">Belongs to the metallo-dependent hydrolases superfamily. Uronate isomerase family.</text>
</comment>
<gene>
    <name evidence="1" type="primary">uxaC</name>
    <name type="ordered locus">Asuc_0145</name>
</gene>
<dbReference type="EC" id="5.3.1.12" evidence="1"/>
<dbReference type="EMBL" id="CP000746">
    <property type="protein sequence ID" value="ABR73525.1"/>
    <property type="molecule type" value="Genomic_DNA"/>
</dbReference>
<dbReference type="RefSeq" id="WP_011978801.1">
    <property type="nucleotide sequence ID" value="NC_009655.1"/>
</dbReference>
<dbReference type="SMR" id="A6VKM8"/>
<dbReference type="STRING" id="339671.Asuc_0145"/>
<dbReference type="KEGG" id="asu:Asuc_0145"/>
<dbReference type="eggNOG" id="COG1904">
    <property type="taxonomic scope" value="Bacteria"/>
</dbReference>
<dbReference type="HOGENOM" id="CLU_044465_1_0_6"/>
<dbReference type="OrthoDB" id="9766564at2"/>
<dbReference type="UniPathway" id="UPA00246"/>
<dbReference type="Proteomes" id="UP000001114">
    <property type="component" value="Chromosome"/>
</dbReference>
<dbReference type="GO" id="GO:0008880">
    <property type="term" value="F:glucuronate isomerase activity"/>
    <property type="evidence" value="ECO:0007669"/>
    <property type="project" value="UniProtKB-UniRule"/>
</dbReference>
<dbReference type="GO" id="GO:0019698">
    <property type="term" value="P:D-galacturonate catabolic process"/>
    <property type="evidence" value="ECO:0007669"/>
    <property type="project" value="TreeGrafter"/>
</dbReference>
<dbReference type="GO" id="GO:0042840">
    <property type="term" value="P:D-glucuronate catabolic process"/>
    <property type="evidence" value="ECO:0007669"/>
    <property type="project" value="TreeGrafter"/>
</dbReference>
<dbReference type="Gene3D" id="3.20.20.140">
    <property type="entry name" value="Metal-dependent hydrolases"/>
    <property type="match status" value="1"/>
</dbReference>
<dbReference type="Gene3D" id="1.10.2020.10">
    <property type="entry name" value="uronate isomerase, domain 2, chain A"/>
    <property type="match status" value="1"/>
</dbReference>
<dbReference type="HAMAP" id="MF_00675">
    <property type="entry name" value="UxaC"/>
    <property type="match status" value="1"/>
</dbReference>
<dbReference type="InterPro" id="IPR032466">
    <property type="entry name" value="Metal_Hydrolase"/>
</dbReference>
<dbReference type="InterPro" id="IPR003766">
    <property type="entry name" value="Uronate_isomerase"/>
</dbReference>
<dbReference type="NCBIfam" id="NF002794">
    <property type="entry name" value="PRK02925.1"/>
    <property type="match status" value="1"/>
</dbReference>
<dbReference type="PANTHER" id="PTHR30068">
    <property type="entry name" value="URONATE ISOMERASE"/>
    <property type="match status" value="1"/>
</dbReference>
<dbReference type="PANTHER" id="PTHR30068:SF4">
    <property type="entry name" value="URONATE ISOMERASE"/>
    <property type="match status" value="1"/>
</dbReference>
<dbReference type="Pfam" id="PF02614">
    <property type="entry name" value="UxaC"/>
    <property type="match status" value="1"/>
</dbReference>
<dbReference type="SUPFAM" id="SSF51556">
    <property type="entry name" value="Metallo-dependent hydrolases"/>
    <property type="match status" value="1"/>
</dbReference>
<evidence type="ECO:0000255" key="1">
    <source>
        <dbReference type="HAMAP-Rule" id="MF_00675"/>
    </source>
</evidence>
<name>UXAC_ACTSZ</name>
<reference key="1">
    <citation type="journal article" date="2010" name="BMC Genomics">
        <title>A genomic perspective on the potential of Actinobacillus succinogenes for industrial succinate production.</title>
        <authorList>
            <person name="McKinlay J.B."/>
            <person name="Laivenieks M."/>
            <person name="Schindler B.D."/>
            <person name="McKinlay A.A."/>
            <person name="Siddaramappa S."/>
            <person name="Challacombe J.F."/>
            <person name="Lowry S.R."/>
            <person name="Clum A."/>
            <person name="Lapidus A.L."/>
            <person name="Burkhart K.B."/>
            <person name="Harkins V."/>
            <person name="Vieille C."/>
        </authorList>
    </citation>
    <scope>NUCLEOTIDE SEQUENCE [LARGE SCALE GENOMIC DNA]</scope>
    <source>
        <strain>ATCC 55618 / DSM 22257 / CCUG 43843 / 130Z</strain>
    </source>
</reference>
<keyword id="KW-0413">Isomerase</keyword>
<keyword id="KW-1185">Reference proteome</keyword>
<accession>A6VKM8</accession>
<protein>
    <recommendedName>
        <fullName evidence="1">Uronate isomerase</fullName>
        <ecNumber evidence="1">5.3.1.12</ecNumber>
    </recommendedName>
    <alternativeName>
        <fullName evidence="1">Glucuronate isomerase</fullName>
    </alternativeName>
    <alternativeName>
        <fullName evidence="1">Uronic isomerase</fullName>
    </alternativeName>
</protein>
<organism>
    <name type="scientific">Actinobacillus succinogenes (strain ATCC 55618 / DSM 22257 / CCUG 43843 / 130Z)</name>
    <dbReference type="NCBI Taxonomy" id="339671"/>
    <lineage>
        <taxon>Bacteria</taxon>
        <taxon>Pseudomonadati</taxon>
        <taxon>Pseudomonadota</taxon>
        <taxon>Gammaproteobacteria</taxon>
        <taxon>Pasteurellales</taxon>
        <taxon>Pasteurellaceae</taxon>
        <taxon>Actinobacillus</taxon>
    </lineage>
</organism>
<feature type="chain" id="PRO_1000072724" description="Uronate isomerase">
    <location>
        <begin position="1"/>
        <end position="467"/>
    </location>
</feature>
<sequence>MKQFMDEDFLLSNDVARTLYFDYAKDQPIFDYHCHLPPKEIAENRLFKDLTEIWLAGDHYKWRAMRSAGFDENVITGNASAYEKYQAWAKTVPLCIGNPIYHWTHLELRRPFGITDTLFGPQSADKIWQECNELLQQPEFSARGIMRRMNVKFSGTTDDPIDSLEYHKAIAEDNAFDIEVAPSWRPDKAVKIELDQFNDYLEQLERVSDTDINSFDALKKALLKRLEHFDQHGCKSADHGMEIVRFAPIPDEKELDRILRLRRSNQALTELQINQYSTALLVWLGTEYCKRNWAMQMHIGALRNNNTRMFKLLGADAGFDSIADRTFAEPLSRLLDTMDQNDELPKTILYCLNPRDNEMIATMIGNFQTGGVAGKIQFGSGWWFNDQKDGMERQLQQLSQLGLLSQFVGMLTDSRSFLSYTRHEYFRRILCEMVGKWVVNGEAPNDMNLLGNMVKNICYNNAKSYFK</sequence>